<gene>
    <name evidence="2" type="primary">tuf1</name>
    <name type="ordered locus">lpp0380</name>
</gene>
<gene>
    <name evidence="2" type="primary">tuf2</name>
    <name type="ordered locus">lpp0392</name>
</gene>
<proteinExistence type="inferred from homology"/>
<feature type="chain" id="PRO_0000337423" description="Elongation factor Tu">
    <location>
        <begin position="1"/>
        <end position="396"/>
    </location>
</feature>
<feature type="domain" description="tr-type G">
    <location>
        <begin position="10"/>
        <end position="206"/>
    </location>
</feature>
<feature type="region of interest" description="G1" evidence="1">
    <location>
        <begin position="19"/>
        <end position="26"/>
    </location>
</feature>
<feature type="region of interest" description="G2" evidence="1">
    <location>
        <begin position="60"/>
        <end position="64"/>
    </location>
</feature>
<feature type="region of interest" description="G3" evidence="1">
    <location>
        <begin position="81"/>
        <end position="84"/>
    </location>
</feature>
<feature type="region of interest" description="G4" evidence="1">
    <location>
        <begin position="136"/>
        <end position="139"/>
    </location>
</feature>
<feature type="region of interest" description="G5" evidence="1">
    <location>
        <begin position="174"/>
        <end position="176"/>
    </location>
</feature>
<feature type="binding site" evidence="2">
    <location>
        <begin position="19"/>
        <end position="26"/>
    </location>
    <ligand>
        <name>GTP</name>
        <dbReference type="ChEBI" id="CHEBI:37565"/>
    </ligand>
</feature>
<feature type="binding site" evidence="2">
    <location>
        <position position="26"/>
    </location>
    <ligand>
        <name>Mg(2+)</name>
        <dbReference type="ChEBI" id="CHEBI:18420"/>
    </ligand>
</feature>
<feature type="binding site" evidence="2">
    <location>
        <begin position="81"/>
        <end position="85"/>
    </location>
    <ligand>
        <name>GTP</name>
        <dbReference type="ChEBI" id="CHEBI:37565"/>
    </ligand>
</feature>
<feature type="binding site" evidence="2">
    <location>
        <begin position="136"/>
        <end position="139"/>
    </location>
    <ligand>
        <name>GTP</name>
        <dbReference type="ChEBI" id="CHEBI:37565"/>
    </ligand>
</feature>
<sequence length="396" mass="43179">MAKEKFERKKPHVNVGTIGHVDHGKTTLTAAITTIMAKKYGGTAKAYDQIDAAPEERERGITISTAHVEYESASRHYAHVDCPGHADYVKNMITGAAQMDGAILVVSAADGPMPQTREHILLSRQVGVPYIVVFMNKADMVDDPELLELVEMEVRDLLSSYDFPGDDIPIVVGSALKALEGEDSDIGVKAIEKLVETMDSYIPEPVRNIDKPFLLPIEDVFSISGRGTVVTGRVESGIVKVGEEVEIVGIRDTQKTTCTGVEMFRKLLDEGRAGDNVGVLLRGTKRDEVERGQVLAKPGTIKPHTKFEAEVYVLSKEEGGRHTPFFNGYRPQFYFRTTDVTGTCDLPSGVEMVMPGDNVQLVVSLHAPIAMDEGLRFAIREGGRTVGAGVVAKIIE</sequence>
<reference key="1">
    <citation type="journal article" date="2004" name="Nat. Genet.">
        <title>Evidence in the Legionella pneumophila genome for exploitation of host cell functions and high genome plasticity.</title>
        <authorList>
            <person name="Cazalet C."/>
            <person name="Rusniok C."/>
            <person name="Brueggemann H."/>
            <person name="Zidane N."/>
            <person name="Magnier A."/>
            <person name="Ma L."/>
            <person name="Tichit M."/>
            <person name="Jarraud S."/>
            <person name="Bouchier C."/>
            <person name="Vandenesch F."/>
            <person name="Kunst F."/>
            <person name="Etienne J."/>
            <person name="Glaser P."/>
            <person name="Buchrieser C."/>
        </authorList>
    </citation>
    <scope>NUCLEOTIDE SEQUENCE [LARGE SCALE GENOMIC DNA]</scope>
    <source>
        <strain>Paris</strain>
    </source>
</reference>
<protein>
    <recommendedName>
        <fullName evidence="2">Elongation factor Tu</fullName>
        <shortName evidence="2">EF-Tu</shortName>
        <ecNumber evidence="2">3.6.5.3</ecNumber>
    </recommendedName>
</protein>
<organism>
    <name type="scientific">Legionella pneumophila (strain Paris)</name>
    <dbReference type="NCBI Taxonomy" id="297246"/>
    <lineage>
        <taxon>Bacteria</taxon>
        <taxon>Pseudomonadati</taxon>
        <taxon>Pseudomonadota</taxon>
        <taxon>Gammaproteobacteria</taxon>
        <taxon>Legionellales</taxon>
        <taxon>Legionellaceae</taxon>
        <taxon>Legionella</taxon>
    </lineage>
</organism>
<evidence type="ECO:0000250" key="1"/>
<evidence type="ECO:0000255" key="2">
    <source>
        <dbReference type="HAMAP-Rule" id="MF_00118"/>
    </source>
</evidence>
<comment type="function">
    <text evidence="2">GTP hydrolase that promotes the GTP-dependent binding of aminoacyl-tRNA to the A-site of ribosomes during protein biosynthesis.</text>
</comment>
<comment type="catalytic activity">
    <reaction evidence="2">
        <text>GTP + H2O = GDP + phosphate + H(+)</text>
        <dbReference type="Rhea" id="RHEA:19669"/>
        <dbReference type="ChEBI" id="CHEBI:15377"/>
        <dbReference type="ChEBI" id="CHEBI:15378"/>
        <dbReference type="ChEBI" id="CHEBI:37565"/>
        <dbReference type="ChEBI" id="CHEBI:43474"/>
        <dbReference type="ChEBI" id="CHEBI:58189"/>
        <dbReference type="EC" id="3.6.5.3"/>
    </reaction>
    <physiologicalReaction direction="left-to-right" evidence="2">
        <dbReference type="Rhea" id="RHEA:19670"/>
    </physiologicalReaction>
</comment>
<comment type="subunit">
    <text evidence="2">Monomer.</text>
</comment>
<comment type="subcellular location">
    <subcellularLocation>
        <location evidence="2">Cytoplasm</location>
    </subcellularLocation>
</comment>
<comment type="similarity">
    <text evidence="2">Belongs to the TRAFAC class translation factor GTPase superfamily. Classic translation factor GTPase family. EF-Tu/EF-1A subfamily.</text>
</comment>
<dbReference type="EC" id="3.6.5.3" evidence="2"/>
<dbReference type="EMBL" id="CR628336">
    <property type="protein sequence ID" value="CAH11528.1"/>
    <property type="molecule type" value="Genomic_DNA"/>
</dbReference>
<dbReference type="EMBL" id="CR628336">
    <property type="protein sequence ID" value="CAH11540.1"/>
    <property type="molecule type" value="Genomic_DNA"/>
</dbReference>
<dbReference type="SMR" id="Q5X873"/>
<dbReference type="KEGG" id="lpp:lpp0380"/>
<dbReference type="KEGG" id="lpp:lpp0392"/>
<dbReference type="LegioList" id="lpp0380"/>
<dbReference type="LegioList" id="lpp0392"/>
<dbReference type="HOGENOM" id="CLU_007265_0_2_6"/>
<dbReference type="GO" id="GO:0005829">
    <property type="term" value="C:cytosol"/>
    <property type="evidence" value="ECO:0007669"/>
    <property type="project" value="TreeGrafter"/>
</dbReference>
<dbReference type="GO" id="GO:0005525">
    <property type="term" value="F:GTP binding"/>
    <property type="evidence" value="ECO:0007669"/>
    <property type="project" value="UniProtKB-UniRule"/>
</dbReference>
<dbReference type="GO" id="GO:0003924">
    <property type="term" value="F:GTPase activity"/>
    <property type="evidence" value="ECO:0007669"/>
    <property type="project" value="InterPro"/>
</dbReference>
<dbReference type="GO" id="GO:0097216">
    <property type="term" value="F:guanosine tetraphosphate binding"/>
    <property type="evidence" value="ECO:0007669"/>
    <property type="project" value="UniProtKB-ARBA"/>
</dbReference>
<dbReference type="GO" id="GO:0003746">
    <property type="term" value="F:translation elongation factor activity"/>
    <property type="evidence" value="ECO:0007669"/>
    <property type="project" value="UniProtKB-UniRule"/>
</dbReference>
<dbReference type="CDD" id="cd01884">
    <property type="entry name" value="EF_Tu"/>
    <property type="match status" value="1"/>
</dbReference>
<dbReference type="CDD" id="cd03697">
    <property type="entry name" value="EFTU_II"/>
    <property type="match status" value="1"/>
</dbReference>
<dbReference type="CDD" id="cd03707">
    <property type="entry name" value="EFTU_III"/>
    <property type="match status" value="1"/>
</dbReference>
<dbReference type="FunFam" id="2.40.30.10:FF:000001">
    <property type="entry name" value="Elongation factor Tu"/>
    <property type="match status" value="1"/>
</dbReference>
<dbReference type="FunFam" id="3.40.50.300:FF:000003">
    <property type="entry name" value="Elongation factor Tu"/>
    <property type="match status" value="1"/>
</dbReference>
<dbReference type="Gene3D" id="3.40.50.300">
    <property type="entry name" value="P-loop containing nucleotide triphosphate hydrolases"/>
    <property type="match status" value="1"/>
</dbReference>
<dbReference type="Gene3D" id="2.40.30.10">
    <property type="entry name" value="Translation factors"/>
    <property type="match status" value="2"/>
</dbReference>
<dbReference type="HAMAP" id="MF_00118_B">
    <property type="entry name" value="EF_Tu_B"/>
    <property type="match status" value="1"/>
</dbReference>
<dbReference type="InterPro" id="IPR041709">
    <property type="entry name" value="EF-Tu_GTP-bd"/>
</dbReference>
<dbReference type="InterPro" id="IPR050055">
    <property type="entry name" value="EF-Tu_GTPase"/>
</dbReference>
<dbReference type="InterPro" id="IPR004161">
    <property type="entry name" value="EFTu-like_2"/>
</dbReference>
<dbReference type="InterPro" id="IPR033720">
    <property type="entry name" value="EFTU_2"/>
</dbReference>
<dbReference type="InterPro" id="IPR031157">
    <property type="entry name" value="G_TR_CS"/>
</dbReference>
<dbReference type="InterPro" id="IPR027417">
    <property type="entry name" value="P-loop_NTPase"/>
</dbReference>
<dbReference type="InterPro" id="IPR005225">
    <property type="entry name" value="Small_GTP-bd"/>
</dbReference>
<dbReference type="InterPro" id="IPR000795">
    <property type="entry name" value="T_Tr_GTP-bd_dom"/>
</dbReference>
<dbReference type="InterPro" id="IPR009000">
    <property type="entry name" value="Transl_B-barrel_sf"/>
</dbReference>
<dbReference type="InterPro" id="IPR009001">
    <property type="entry name" value="Transl_elong_EF1A/Init_IF2_C"/>
</dbReference>
<dbReference type="InterPro" id="IPR004541">
    <property type="entry name" value="Transl_elong_EFTu/EF1A_bac/org"/>
</dbReference>
<dbReference type="InterPro" id="IPR004160">
    <property type="entry name" value="Transl_elong_EFTu/EF1A_C"/>
</dbReference>
<dbReference type="NCBIfam" id="TIGR00485">
    <property type="entry name" value="EF-Tu"/>
    <property type="match status" value="1"/>
</dbReference>
<dbReference type="NCBIfam" id="NF000766">
    <property type="entry name" value="PRK00049.1"/>
    <property type="match status" value="1"/>
</dbReference>
<dbReference type="NCBIfam" id="NF009372">
    <property type="entry name" value="PRK12735.1"/>
    <property type="match status" value="1"/>
</dbReference>
<dbReference type="NCBIfam" id="NF009373">
    <property type="entry name" value="PRK12736.1"/>
    <property type="match status" value="1"/>
</dbReference>
<dbReference type="NCBIfam" id="TIGR00231">
    <property type="entry name" value="small_GTP"/>
    <property type="match status" value="1"/>
</dbReference>
<dbReference type="PANTHER" id="PTHR43721:SF22">
    <property type="entry name" value="ELONGATION FACTOR TU, MITOCHONDRIAL"/>
    <property type="match status" value="1"/>
</dbReference>
<dbReference type="PANTHER" id="PTHR43721">
    <property type="entry name" value="ELONGATION FACTOR TU-RELATED"/>
    <property type="match status" value="1"/>
</dbReference>
<dbReference type="Pfam" id="PF00009">
    <property type="entry name" value="GTP_EFTU"/>
    <property type="match status" value="1"/>
</dbReference>
<dbReference type="Pfam" id="PF03144">
    <property type="entry name" value="GTP_EFTU_D2"/>
    <property type="match status" value="1"/>
</dbReference>
<dbReference type="Pfam" id="PF03143">
    <property type="entry name" value="GTP_EFTU_D3"/>
    <property type="match status" value="1"/>
</dbReference>
<dbReference type="PRINTS" id="PR00315">
    <property type="entry name" value="ELONGATNFCT"/>
</dbReference>
<dbReference type="SUPFAM" id="SSF50465">
    <property type="entry name" value="EF-Tu/eEF-1alpha/eIF2-gamma C-terminal domain"/>
    <property type="match status" value="1"/>
</dbReference>
<dbReference type="SUPFAM" id="SSF52540">
    <property type="entry name" value="P-loop containing nucleoside triphosphate hydrolases"/>
    <property type="match status" value="1"/>
</dbReference>
<dbReference type="SUPFAM" id="SSF50447">
    <property type="entry name" value="Translation proteins"/>
    <property type="match status" value="1"/>
</dbReference>
<dbReference type="PROSITE" id="PS00301">
    <property type="entry name" value="G_TR_1"/>
    <property type="match status" value="1"/>
</dbReference>
<dbReference type="PROSITE" id="PS51722">
    <property type="entry name" value="G_TR_2"/>
    <property type="match status" value="1"/>
</dbReference>
<name>EFTU_LEGPA</name>
<keyword id="KW-0963">Cytoplasm</keyword>
<keyword id="KW-0251">Elongation factor</keyword>
<keyword id="KW-0342">GTP-binding</keyword>
<keyword id="KW-0378">Hydrolase</keyword>
<keyword id="KW-0460">Magnesium</keyword>
<keyword id="KW-0479">Metal-binding</keyword>
<keyword id="KW-0547">Nucleotide-binding</keyword>
<keyword id="KW-0648">Protein biosynthesis</keyword>
<accession>Q5X873</accession>